<dbReference type="EC" id="2.5.1.6" evidence="1"/>
<dbReference type="EMBL" id="AE016830">
    <property type="protein sequence ID" value="AAO80599.1"/>
    <property type="molecule type" value="Genomic_DNA"/>
</dbReference>
<dbReference type="RefSeq" id="NP_814529.1">
    <property type="nucleotide sequence ID" value="NC_004668.1"/>
</dbReference>
<dbReference type="RefSeq" id="WP_002355656.1">
    <property type="nucleotide sequence ID" value="NZ_KE136527.1"/>
</dbReference>
<dbReference type="SMR" id="Q837P9"/>
<dbReference type="STRING" id="226185.EF_0784"/>
<dbReference type="EnsemblBacteria" id="AAO80599">
    <property type="protein sequence ID" value="AAO80599"/>
    <property type="gene ID" value="EF_0784"/>
</dbReference>
<dbReference type="KEGG" id="efa:EF0784"/>
<dbReference type="PATRIC" id="fig|226185.45.peg.2722"/>
<dbReference type="eggNOG" id="COG0192">
    <property type="taxonomic scope" value="Bacteria"/>
</dbReference>
<dbReference type="HOGENOM" id="CLU_041802_1_1_9"/>
<dbReference type="UniPathway" id="UPA00315">
    <property type="reaction ID" value="UER00080"/>
</dbReference>
<dbReference type="Proteomes" id="UP000001415">
    <property type="component" value="Chromosome"/>
</dbReference>
<dbReference type="GO" id="GO:0005737">
    <property type="term" value="C:cytoplasm"/>
    <property type="evidence" value="ECO:0007669"/>
    <property type="project" value="UniProtKB-SubCell"/>
</dbReference>
<dbReference type="GO" id="GO:0005524">
    <property type="term" value="F:ATP binding"/>
    <property type="evidence" value="ECO:0007669"/>
    <property type="project" value="UniProtKB-UniRule"/>
</dbReference>
<dbReference type="GO" id="GO:0000287">
    <property type="term" value="F:magnesium ion binding"/>
    <property type="evidence" value="ECO:0007669"/>
    <property type="project" value="UniProtKB-UniRule"/>
</dbReference>
<dbReference type="GO" id="GO:0004478">
    <property type="term" value="F:methionine adenosyltransferase activity"/>
    <property type="evidence" value="ECO:0007669"/>
    <property type="project" value="UniProtKB-UniRule"/>
</dbReference>
<dbReference type="GO" id="GO:0006730">
    <property type="term" value="P:one-carbon metabolic process"/>
    <property type="evidence" value="ECO:0007669"/>
    <property type="project" value="UniProtKB-KW"/>
</dbReference>
<dbReference type="GO" id="GO:0006556">
    <property type="term" value="P:S-adenosylmethionine biosynthetic process"/>
    <property type="evidence" value="ECO:0007669"/>
    <property type="project" value="UniProtKB-UniRule"/>
</dbReference>
<dbReference type="CDD" id="cd18079">
    <property type="entry name" value="S-AdoMet_synt"/>
    <property type="match status" value="1"/>
</dbReference>
<dbReference type="FunFam" id="3.30.300.10:FF:000003">
    <property type="entry name" value="S-adenosylmethionine synthase"/>
    <property type="match status" value="1"/>
</dbReference>
<dbReference type="FunFam" id="3.30.300.10:FF:000004">
    <property type="entry name" value="S-adenosylmethionine synthase"/>
    <property type="match status" value="1"/>
</dbReference>
<dbReference type="Gene3D" id="3.30.300.10">
    <property type="match status" value="3"/>
</dbReference>
<dbReference type="HAMAP" id="MF_00086">
    <property type="entry name" value="S_AdoMet_synth1"/>
    <property type="match status" value="1"/>
</dbReference>
<dbReference type="InterPro" id="IPR022631">
    <property type="entry name" value="ADOMET_SYNTHASE_CS"/>
</dbReference>
<dbReference type="InterPro" id="IPR022630">
    <property type="entry name" value="S-AdoMet_synt_C"/>
</dbReference>
<dbReference type="InterPro" id="IPR022629">
    <property type="entry name" value="S-AdoMet_synt_central"/>
</dbReference>
<dbReference type="InterPro" id="IPR022628">
    <property type="entry name" value="S-AdoMet_synt_N"/>
</dbReference>
<dbReference type="InterPro" id="IPR002133">
    <property type="entry name" value="S-AdoMet_synthetase"/>
</dbReference>
<dbReference type="InterPro" id="IPR022636">
    <property type="entry name" value="S-AdoMet_synthetase_sfam"/>
</dbReference>
<dbReference type="NCBIfam" id="TIGR01034">
    <property type="entry name" value="metK"/>
    <property type="match status" value="1"/>
</dbReference>
<dbReference type="PANTHER" id="PTHR11964">
    <property type="entry name" value="S-ADENOSYLMETHIONINE SYNTHETASE"/>
    <property type="match status" value="1"/>
</dbReference>
<dbReference type="Pfam" id="PF02773">
    <property type="entry name" value="S-AdoMet_synt_C"/>
    <property type="match status" value="1"/>
</dbReference>
<dbReference type="Pfam" id="PF02772">
    <property type="entry name" value="S-AdoMet_synt_M"/>
    <property type="match status" value="1"/>
</dbReference>
<dbReference type="Pfam" id="PF00438">
    <property type="entry name" value="S-AdoMet_synt_N"/>
    <property type="match status" value="1"/>
</dbReference>
<dbReference type="PIRSF" id="PIRSF000497">
    <property type="entry name" value="MAT"/>
    <property type="match status" value="1"/>
</dbReference>
<dbReference type="SUPFAM" id="SSF55973">
    <property type="entry name" value="S-adenosylmethionine synthetase"/>
    <property type="match status" value="3"/>
</dbReference>
<dbReference type="PROSITE" id="PS00376">
    <property type="entry name" value="ADOMET_SYNTHASE_1"/>
    <property type="match status" value="1"/>
</dbReference>
<dbReference type="PROSITE" id="PS00377">
    <property type="entry name" value="ADOMET_SYNTHASE_2"/>
    <property type="match status" value="1"/>
</dbReference>
<proteinExistence type="inferred from homology"/>
<protein>
    <recommendedName>
        <fullName evidence="1">S-adenosylmethionine synthase</fullName>
        <shortName evidence="1">AdoMet synthase</shortName>
        <ecNumber evidence="1">2.5.1.6</ecNumber>
    </recommendedName>
    <alternativeName>
        <fullName evidence="1">MAT</fullName>
    </alternativeName>
    <alternativeName>
        <fullName evidence="1">Methionine adenosyltransferase</fullName>
    </alternativeName>
</protein>
<reference key="1">
    <citation type="journal article" date="2003" name="Science">
        <title>Role of mobile DNA in the evolution of vancomycin-resistant Enterococcus faecalis.</title>
        <authorList>
            <person name="Paulsen I.T."/>
            <person name="Banerjei L."/>
            <person name="Myers G.S.A."/>
            <person name="Nelson K.E."/>
            <person name="Seshadri R."/>
            <person name="Read T.D."/>
            <person name="Fouts D.E."/>
            <person name="Eisen J.A."/>
            <person name="Gill S.R."/>
            <person name="Heidelberg J.F."/>
            <person name="Tettelin H."/>
            <person name="Dodson R.J."/>
            <person name="Umayam L.A."/>
            <person name="Brinkac L.M."/>
            <person name="Beanan M.J."/>
            <person name="Daugherty S.C."/>
            <person name="DeBoy R.T."/>
            <person name="Durkin S.A."/>
            <person name="Kolonay J.F."/>
            <person name="Madupu R."/>
            <person name="Nelson W.C."/>
            <person name="Vamathevan J.J."/>
            <person name="Tran B."/>
            <person name="Upton J."/>
            <person name="Hansen T."/>
            <person name="Shetty J."/>
            <person name="Khouri H.M."/>
            <person name="Utterback T.R."/>
            <person name="Radune D."/>
            <person name="Ketchum K.A."/>
            <person name="Dougherty B.A."/>
            <person name="Fraser C.M."/>
        </authorList>
    </citation>
    <scope>NUCLEOTIDE SEQUENCE [LARGE SCALE GENOMIC DNA]</scope>
    <source>
        <strain>ATCC 700802 / V583</strain>
    </source>
</reference>
<evidence type="ECO:0000255" key="1">
    <source>
        <dbReference type="HAMAP-Rule" id="MF_00086"/>
    </source>
</evidence>
<feature type="chain" id="PRO_0000174521" description="S-adenosylmethionine synthase">
    <location>
        <begin position="1"/>
        <end position="394"/>
    </location>
</feature>
<feature type="region of interest" description="Flexible loop" evidence="1">
    <location>
        <begin position="100"/>
        <end position="110"/>
    </location>
</feature>
<feature type="binding site" description="in other chain" evidence="1">
    <location>
        <position position="16"/>
    </location>
    <ligand>
        <name>ATP</name>
        <dbReference type="ChEBI" id="CHEBI:30616"/>
        <note>ligand shared between two neighboring subunits</note>
    </ligand>
</feature>
<feature type="binding site" evidence="1">
    <location>
        <position position="18"/>
    </location>
    <ligand>
        <name>Mg(2+)</name>
        <dbReference type="ChEBI" id="CHEBI:18420"/>
    </ligand>
</feature>
<feature type="binding site" evidence="1">
    <location>
        <position position="44"/>
    </location>
    <ligand>
        <name>K(+)</name>
        <dbReference type="ChEBI" id="CHEBI:29103"/>
    </ligand>
</feature>
<feature type="binding site" description="in other chain" evidence="1">
    <location>
        <position position="57"/>
    </location>
    <ligand>
        <name>L-methionine</name>
        <dbReference type="ChEBI" id="CHEBI:57844"/>
        <note>ligand shared between two neighboring subunits</note>
    </ligand>
</feature>
<feature type="binding site" description="in other chain" evidence="1">
    <location>
        <position position="100"/>
    </location>
    <ligand>
        <name>L-methionine</name>
        <dbReference type="ChEBI" id="CHEBI:57844"/>
        <note>ligand shared between two neighboring subunits</note>
    </ligand>
</feature>
<feature type="binding site" description="in other chain" evidence="1">
    <location>
        <begin position="172"/>
        <end position="174"/>
    </location>
    <ligand>
        <name>ATP</name>
        <dbReference type="ChEBI" id="CHEBI:30616"/>
        <note>ligand shared between two neighboring subunits</note>
    </ligand>
</feature>
<feature type="binding site" description="in other chain" evidence="1">
    <location>
        <begin position="239"/>
        <end position="240"/>
    </location>
    <ligand>
        <name>ATP</name>
        <dbReference type="ChEBI" id="CHEBI:30616"/>
        <note>ligand shared between two neighboring subunits</note>
    </ligand>
</feature>
<feature type="binding site" evidence="1">
    <location>
        <position position="248"/>
    </location>
    <ligand>
        <name>ATP</name>
        <dbReference type="ChEBI" id="CHEBI:30616"/>
        <note>ligand shared between two neighboring subunits</note>
    </ligand>
</feature>
<feature type="binding site" evidence="1">
    <location>
        <position position="248"/>
    </location>
    <ligand>
        <name>L-methionine</name>
        <dbReference type="ChEBI" id="CHEBI:57844"/>
        <note>ligand shared between two neighboring subunits</note>
    </ligand>
</feature>
<feature type="binding site" description="in other chain" evidence="1">
    <location>
        <begin position="254"/>
        <end position="255"/>
    </location>
    <ligand>
        <name>ATP</name>
        <dbReference type="ChEBI" id="CHEBI:30616"/>
        <note>ligand shared between two neighboring subunits</note>
    </ligand>
</feature>
<feature type="binding site" evidence="1">
    <location>
        <position position="271"/>
    </location>
    <ligand>
        <name>ATP</name>
        <dbReference type="ChEBI" id="CHEBI:30616"/>
        <note>ligand shared between two neighboring subunits</note>
    </ligand>
</feature>
<feature type="binding site" evidence="1">
    <location>
        <position position="275"/>
    </location>
    <ligand>
        <name>ATP</name>
        <dbReference type="ChEBI" id="CHEBI:30616"/>
        <note>ligand shared between two neighboring subunits</note>
    </ligand>
</feature>
<feature type="binding site" description="in other chain" evidence="1">
    <location>
        <position position="279"/>
    </location>
    <ligand>
        <name>L-methionine</name>
        <dbReference type="ChEBI" id="CHEBI:57844"/>
        <note>ligand shared between two neighboring subunits</note>
    </ligand>
</feature>
<gene>
    <name evidence="1" type="primary">metK</name>
    <name type="ordered locus">EF_0784</name>
</gene>
<keyword id="KW-0067">ATP-binding</keyword>
<keyword id="KW-0963">Cytoplasm</keyword>
<keyword id="KW-0460">Magnesium</keyword>
<keyword id="KW-0479">Metal-binding</keyword>
<keyword id="KW-0547">Nucleotide-binding</keyword>
<keyword id="KW-0554">One-carbon metabolism</keyword>
<keyword id="KW-0630">Potassium</keyword>
<keyword id="KW-1185">Reference proteome</keyword>
<keyword id="KW-0808">Transferase</keyword>
<accession>Q837P9</accession>
<organism>
    <name type="scientific">Enterococcus faecalis (strain ATCC 700802 / V583)</name>
    <dbReference type="NCBI Taxonomy" id="226185"/>
    <lineage>
        <taxon>Bacteria</taxon>
        <taxon>Bacillati</taxon>
        <taxon>Bacillota</taxon>
        <taxon>Bacilli</taxon>
        <taxon>Lactobacillales</taxon>
        <taxon>Enterococcaceae</taxon>
        <taxon>Enterococcus</taxon>
    </lineage>
</organism>
<sequence>MTERHLFTSESVSEGHPDKVADQVSDAILDAILEKDPMARVACETSVTTGLVLVFGEISTTAYVDIQKIVRQTVKDIGYTRAKYGFDGETVAVLVAIDEQSPDIAQGVDAALEVRDQDEKDDIGAGDQGLMFGFAVDETPELMPLPIALSHRLVRRLAELRKEKVLPYLRPDAKSQVTVEYDDQGQPQRVDTIVISTQHDDETTLEQIEKDIKEQVINEVIPHELLDDETKYFINPTGRFVIGGPQGDAGLTGRKIIVDTYGGYARHGGGAFSGKDATKVDRSASYAARYIAKNIVAAGLAKKVEVQLAYAIGVAQPVSISINTFGTSDLPESKLIEAVRKNFDLRPAGIIEMLDLRRPIYKQTAAYGHFGRTDIDLPWEQTDKVEALKASLAE</sequence>
<comment type="function">
    <text evidence="1">Catalyzes the formation of S-adenosylmethionine (AdoMet) from methionine and ATP. The overall synthetic reaction is composed of two sequential steps, AdoMet formation and the subsequent tripolyphosphate hydrolysis which occurs prior to release of AdoMet from the enzyme.</text>
</comment>
<comment type="catalytic activity">
    <reaction evidence="1">
        <text>L-methionine + ATP + H2O = S-adenosyl-L-methionine + phosphate + diphosphate</text>
        <dbReference type="Rhea" id="RHEA:21080"/>
        <dbReference type="ChEBI" id="CHEBI:15377"/>
        <dbReference type="ChEBI" id="CHEBI:30616"/>
        <dbReference type="ChEBI" id="CHEBI:33019"/>
        <dbReference type="ChEBI" id="CHEBI:43474"/>
        <dbReference type="ChEBI" id="CHEBI:57844"/>
        <dbReference type="ChEBI" id="CHEBI:59789"/>
        <dbReference type="EC" id="2.5.1.6"/>
    </reaction>
</comment>
<comment type="cofactor">
    <cofactor evidence="1">
        <name>Mg(2+)</name>
        <dbReference type="ChEBI" id="CHEBI:18420"/>
    </cofactor>
    <text evidence="1">Binds 2 divalent ions per subunit.</text>
</comment>
<comment type="cofactor">
    <cofactor evidence="1">
        <name>K(+)</name>
        <dbReference type="ChEBI" id="CHEBI:29103"/>
    </cofactor>
    <text evidence="1">Binds 1 potassium ion per subunit.</text>
</comment>
<comment type="pathway">
    <text evidence="1">Amino-acid biosynthesis; S-adenosyl-L-methionine biosynthesis; S-adenosyl-L-methionine from L-methionine: step 1/1.</text>
</comment>
<comment type="subunit">
    <text evidence="1">Homotetramer; dimer of dimers.</text>
</comment>
<comment type="subcellular location">
    <subcellularLocation>
        <location evidence="1">Cytoplasm</location>
    </subcellularLocation>
</comment>
<comment type="similarity">
    <text evidence="1">Belongs to the AdoMet synthase family.</text>
</comment>
<name>METK_ENTFA</name>